<sequence length="215" mass="23667">MKTVLLTGFDPFGGENINPAWEVAKNLHEKTIGEYKIISKQVPTVFHKSISVLKEYIEELAPEFIICIGQAGGRPDITIERVAINIDDARIADNEGNQPVDVPVVEEGPTAYWSTLPMKAIVKRLQEEGIPASVSQTAGTFVCNHLFYGLMHELEKRDKKIKGGFVHIPFLPEQASKYPGQPSMSLSTIRKGIELAVEVTMTVEVDIVEIGGATH</sequence>
<reference key="1">
    <citation type="journal article" date="2004" name="Nucleic Acids Res.">
        <title>The genome sequence of Bacillus cereus ATCC 10987 reveals metabolic adaptations and a large plasmid related to Bacillus anthracis pXO1.</title>
        <authorList>
            <person name="Rasko D.A."/>
            <person name="Ravel J."/>
            <person name="Oekstad O.A."/>
            <person name="Helgason E."/>
            <person name="Cer R.Z."/>
            <person name="Jiang L."/>
            <person name="Shores K.A."/>
            <person name="Fouts D.E."/>
            <person name="Tourasse N.J."/>
            <person name="Angiuoli S.V."/>
            <person name="Kolonay J.F."/>
            <person name="Nelson W.C."/>
            <person name="Kolstoe A.-B."/>
            <person name="Fraser C.M."/>
            <person name="Read T.D."/>
        </authorList>
    </citation>
    <scope>NUCLEOTIDE SEQUENCE [LARGE SCALE GENOMIC DNA]</scope>
    <source>
        <strain>ATCC 10987 / NRS 248</strain>
    </source>
</reference>
<organism>
    <name type="scientific">Bacillus cereus (strain ATCC 10987 / NRS 248)</name>
    <dbReference type="NCBI Taxonomy" id="222523"/>
    <lineage>
        <taxon>Bacteria</taxon>
        <taxon>Bacillati</taxon>
        <taxon>Bacillota</taxon>
        <taxon>Bacilli</taxon>
        <taxon>Bacillales</taxon>
        <taxon>Bacillaceae</taxon>
        <taxon>Bacillus</taxon>
        <taxon>Bacillus cereus group</taxon>
    </lineage>
</organism>
<gene>
    <name evidence="1" type="primary">pcp</name>
    <name type="ordered locus">BCE_3116</name>
</gene>
<dbReference type="EC" id="3.4.19.3" evidence="1"/>
<dbReference type="EMBL" id="AE017194">
    <property type="protein sequence ID" value="AAS42026.1"/>
    <property type="molecule type" value="Genomic_DNA"/>
</dbReference>
<dbReference type="SMR" id="Q735N6"/>
<dbReference type="MEROPS" id="C15.001"/>
<dbReference type="KEGG" id="bca:BCE_3116"/>
<dbReference type="HOGENOM" id="CLU_043960_4_0_9"/>
<dbReference type="Proteomes" id="UP000002527">
    <property type="component" value="Chromosome"/>
</dbReference>
<dbReference type="GO" id="GO:0005829">
    <property type="term" value="C:cytosol"/>
    <property type="evidence" value="ECO:0007669"/>
    <property type="project" value="InterPro"/>
</dbReference>
<dbReference type="GO" id="GO:0016920">
    <property type="term" value="F:pyroglutamyl-peptidase activity"/>
    <property type="evidence" value="ECO:0007669"/>
    <property type="project" value="UniProtKB-UniRule"/>
</dbReference>
<dbReference type="GO" id="GO:0006508">
    <property type="term" value="P:proteolysis"/>
    <property type="evidence" value="ECO:0007669"/>
    <property type="project" value="UniProtKB-KW"/>
</dbReference>
<dbReference type="CDD" id="cd00501">
    <property type="entry name" value="Peptidase_C15"/>
    <property type="match status" value="1"/>
</dbReference>
<dbReference type="FunFam" id="3.40.630.20:FF:000001">
    <property type="entry name" value="Pyrrolidone-carboxylate peptidase"/>
    <property type="match status" value="1"/>
</dbReference>
<dbReference type="Gene3D" id="3.40.630.20">
    <property type="entry name" value="Peptidase C15, pyroglutamyl peptidase I-like"/>
    <property type="match status" value="1"/>
</dbReference>
<dbReference type="HAMAP" id="MF_00417">
    <property type="entry name" value="Pyrrolid_peptidase"/>
    <property type="match status" value="1"/>
</dbReference>
<dbReference type="InterPro" id="IPR000816">
    <property type="entry name" value="Peptidase_C15"/>
</dbReference>
<dbReference type="InterPro" id="IPR016125">
    <property type="entry name" value="Peptidase_C15-like"/>
</dbReference>
<dbReference type="InterPro" id="IPR036440">
    <property type="entry name" value="Peptidase_C15-like_sf"/>
</dbReference>
<dbReference type="InterPro" id="IPR029762">
    <property type="entry name" value="PGP-I_bact-type"/>
</dbReference>
<dbReference type="InterPro" id="IPR033694">
    <property type="entry name" value="PGPEP1_Cys_AS"/>
</dbReference>
<dbReference type="InterPro" id="IPR033693">
    <property type="entry name" value="PGPEP1_Glu_AS"/>
</dbReference>
<dbReference type="NCBIfam" id="NF009676">
    <property type="entry name" value="PRK13197.1"/>
    <property type="match status" value="1"/>
</dbReference>
<dbReference type="NCBIfam" id="TIGR00504">
    <property type="entry name" value="pyro_pdase"/>
    <property type="match status" value="1"/>
</dbReference>
<dbReference type="PANTHER" id="PTHR23402">
    <property type="entry name" value="PROTEASE FAMILY C15 PYROGLUTAMYL-PEPTIDASE I-RELATED"/>
    <property type="match status" value="1"/>
</dbReference>
<dbReference type="PANTHER" id="PTHR23402:SF1">
    <property type="entry name" value="PYROGLUTAMYL-PEPTIDASE I"/>
    <property type="match status" value="1"/>
</dbReference>
<dbReference type="Pfam" id="PF01470">
    <property type="entry name" value="Peptidase_C15"/>
    <property type="match status" value="1"/>
</dbReference>
<dbReference type="PIRSF" id="PIRSF015592">
    <property type="entry name" value="Prld-crbxl_pptds"/>
    <property type="match status" value="1"/>
</dbReference>
<dbReference type="PRINTS" id="PR00706">
    <property type="entry name" value="PYROGLUPTASE"/>
</dbReference>
<dbReference type="SUPFAM" id="SSF53182">
    <property type="entry name" value="Pyrrolidone carboxyl peptidase (pyroglutamate aminopeptidase)"/>
    <property type="match status" value="1"/>
</dbReference>
<dbReference type="PROSITE" id="PS01334">
    <property type="entry name" value="PYRASE_CYS"/>
    <property type="match status" value="1"/>
</dbReference>
<dbReference type="PROSITE" id="PS01333">
    <property type="entry name" value="PYRASE_GLU"/>
    <property type="match status" value="1"/>
</dbReference>
<keyword id="KW-0963">Cytoplasm</keyword>
<keyword id="KW-0378">Hydrolase</keyword>
<keyword id="KW-0645">Protease</keyword>
<keyword id="KW-0788">Thiol protease</keyword>
<feature type="chain" id="PRO_0000184708" description="Pyrrolidone-carboxylate peptidase">
    <location>
        <begin position="1"/>
        <end position="215"/>
    </location>
</feature>
<feature type="active site" evidence="1">
    <location>
        <position position="80"/>
    </location>
</feature>
<feature type="active site" evidence="1">
    <location>
        <position position="143"/>
    </location>
</feature>
<feature type="active site" evidence="1">
    <location>
        <position position="167"/>
    </location>
</feature>
<accession>Q735N6</accession>
<evidence type="ECO:0000255" key="1">
    <source>
        <dbReference type="HAMAP-Rule" id="MF_00417"/>
    </source>
</evidence>
<comment type="function">
    <text evidence="1">Removes 5-oxoproline from various penultimate amino acid residues except L-proline.</text>
</comment>
<comment type="catalytic activity">
    <reaction evidence="1">
        <text>Release of an N-terminal pyroglutamyl group from a polypeptide, the second amino acid generally not being Pro.</text>
        <dbReference type="EC" id="3.4.19.3"/>
    </reaction>
</comment>
<comment type="subunit">
    <text evidence="1">Homotetramer.</text>
</comment>
<comment type="subcellular location">
    <subcellularLocation>
        <location evidence="1">Cytoplasm</location>
    </subcellularLocation>
</comment>
<comment type="similarity">
    <text evidence="1">Belongs to the peptidase C15 family.</text>
</comment>
<name>PCP_BACC1</name>
<proteinExistence type="inferred from homology"/>
<protein>
    <recommendedName>
        <fullName evidence="1">Pyrrolidone-carboxylate peptidase</fullName>
        <ecNumber evidence="1">3.4.19.3</ecNumber>
    </recommendedName>
    <alternativeName>
        <fullName evidence="1">5-oxoprolyl-peptidase</fullName>
    </alternativeName>
    <alternativeName>
        <fullName evidence="1">Pyroglutamyl-peptidase I</fullName>
        <shortName evidence="1">PGP-I</shortName>
        <shortName evidence="1">Pyrase</shortName>
    </alternativeName>
</protein>